<sequence length="500" mass="54714">MSIIDTRTPEPKRFISGATGDWEVVIGMEVHAQVTSESKLFSGASTAFGAEPNSNVSLVDAAMPGMLPVINLECVRQAVRTGIGLNAQINLKSVFDRKNYFYPDLPQGYQISQFKQPIVGEGKIMISVGPDNKGQFEDVEIGIERLHLEQDAGKSMHDQHPTMSYVDLNRSGVALMEIVSKPDLRSSDEARAYLTKLRTIVRYLGTCDGNMDEGSMRADVNVSVRRPGGEFGTRCEIKNVNSIRFVGQAIEYEARRQIAILEDGGVIDQETRLFDPVKGETRSMRSKEEAHDYRYFPDPDLLPLEFDQAFVDALAAKLPELPDVKKQRLVETLGISVYDASILVTEKAIADYYEAVAEGRDGKAAANWVINDLLGALNKAGKDIEESPISPAQLGAIIDLIKEGTISGKIAKDLFEIVWNEGGDPKKLVEERGMKQVTDTGAIEKAVDDVIAANPDKVEQAKAKPTLAGWFVGQVMKATGGKANPQAVNELVKSKLGIEE</sequence>
<comment type="function">
    <text evidence="1">Allows the formation of correctly charged Asn-tRNA(Asn) or Gln-tRNA(Gln) through the transamidation of misacylated Asp-tRNA(Asn) or Glu-tRNA(Gln) in organisms which lack either or both of asparaginyl-tRNA or glutaminyl-tRNA synthetases. The reaction takes place in the presence of glutamine and ATP through an activated phospho-Asp-tRNA(Asn) or phospho-Glu-tRNA(Gln).</text>
</comment>
<comment type="catalytic activity">
    <reaction evidence="1">
        <text>L-glutamyl-tRNA(Gln) + L-glutamine + ATP + H2O = L-glutaminyl-tRNA(Gln) + L-glutamate + ADP + phosphate + H(+)</text>
        <dbReference type="Rhea" id="RHEA:17521"/>
        <dbReference type="Rhea" id="RHEA-COMP:9681"/>
        <dbReference type="Rhea" id="RHEA-COMP:9684"/>
        <dbReference type="ChEBI" id="CHEBI:15377"/>
        <dbReference type="ChEBI" id="CHEBI:15378"/>
        <dbReference type="ChEBI" id="CHEBI:29985"/>
        <dbReference type="ChEBI" id="CHEBI:30616"/>
        <dbReference type="ChEBI" id="CHEBI:43474"/>
        <dbReference type="ChEBI" id="CHEBI:58359"/>
        <dbReference type="ChEBI" id="CHEBI:78520"/>
        <dbReference type="ChEBI" id="CHEBI:78521"/>
        <dbReference type="ChEBI" id="CHEBI:456216"/>
    </reaction>
</comment>
<comment type="catalytic activity">
    <reaction evidence="1">
        <text>L-aspartyl-tRNA(Asn) + L-glutamine + ATP + H2O = L-asparaginyl-tRNA(Asn) + L-glutamate + ADP + phosphate + 2 H(+)</text>
        <dbReference type="Rhea" id="RHEA:14513"/>
        <dbReference type="Rhea" id="RHEA-COMP:9674"/>
        <dbReference type="Rhea" id="RHEA-COMP:9677"/>
        <dbReference type="ChEBI" id="CHEBI:15377"/>
        <dbReference type="ChEBI" id="CHEBI:15378"/>
        <dbReference type="ChEBI" id="CHEBI:29985"/>
        <dbReference type="ChEBI" id="CHEBI:30616"/>
        <dbReference type="ChEBI" id="CHEBI:43474"/>
        <dbReference type="ChEBI" id="CHEBI:58359"/>
        <dbReference type="ChEBI" id="CHEBI:78515"/>
        <dbReference type="ChEBI" id="CHEBI:78516"/>
        <dbReference type="ChEBI" id="CHEBI:456216"/>
    </reaction>
</comment>
<comment type="subunit">
    <text evidence="1">Heterotrimer of A, B and C subunits.</text>
</comment>
<comment type="similarity">
    <text evidence="1">Belongs to the GatB/GatE family. GatB subfamily.</text>
</comment>
<protein>
    <recommendedName>
        <fullName evidence="1">Aspartyl/glutamyl-tRNA(Asn/Gln) amidotransferase subunit B</fullName>
        <shortName evidence="1">Asp/Glu-ADT subunit B</shortName>
        <ecNumber evidence="1">6.3.5.-</ecNumber>
    </recommendedName>
</protein>
<reference key="1">
    <citation type="submission" date="2009-03" db="EMBL/GenBank/DDBJ databases">
        <title>Brucella melitensis ATCC 23457 whole genome shotgun sequencing project.</title>
        <authorList>
            <person name="Setubal J.C."/>
            <person name="Boyle S."/>
            <person name="Crasta O.R."/>
            <person name="Gillespie J.J."/>
            <person name="Kenyon R.W."/>
            <person name="Lu J."/>
            <person name="Mane S."/>
            <person name="Nagrani S."/>
            <person name="Shallom J.M."/>
            <person name="Shallom S."/>
            <person name="Shukla M."/>
            <person name="Snyder E.E."/>
            <person name="Sobral B.W."/>
            <person name="Wattam A.R."/>
            <person name="Will R."/>
            <person name="Williams K."/>
            <person name="Yoo H."/>
            <person name="Munk C."/>
            <person name="Tapia R."/>
            <person name="Han C."/>
            <person name="Detter J.C."/>
            <person name="Bruce D."/>
            <person name="Brettin T.S."/>
        </authorList>
    </citation>
    <scope>NUCLEOTIDE SEQUENCE [LARGE SCALE GENOMIC DNA]</scope>
    <source>
        <strain>ATCC 23457</strain>
    </source>
</reference>
<name>GATB_BRUMB</name>
<gene>
    <name evidence="1" type="primary">gatB</name>
    <name type="ordered locus">BMEA_A0939</name>
</gene>
<feature type="chain" id="PRO_1000122514" description="Aspartyl/glutamyl-tRNA(Asn/Gln) amidotransferase subunit B">
    <location>
        <begin position="1"/>
        <end position="500"/>
    </location>
</feature>
<dbReference type="EC" id="6.3.5.-" evidence="1"/>
<dbReference type="EMBL" id="CP001488">
    <property type="protein sequence ID" value="ACO00691.1"/>
    <property type="molecule type" value="Genomic_DNA"/>
</dbReference>
<dbReference type="RefSeq" id="WP_002964030.1">
    <property type="nucleotide sequence ID" value="NC_012441.1"/>
</dbReference>
<dbReference type="SMR" id="C0RIN3"/>
<dbReference type="GeneID" id="97533805"/>
<dbReference type="KEGG" id="bmi:BMEA_A0939"/>
<dbReference type="HOGENOM" id="CLU_019240_0_0_5"/>
<dbReference type="Proteomes" id="UP000001748">
    <property type="component" value="Chromosome I"/>
</dbReference>
<dbReference type="GO" id="GO:0050566">
    <property type="term" value="F:asparaginyl-tRNA synthase (glutamine-hydrolyzing) activity"/>
    <property type="evidence" value="ECO:0007669"/>
    <property type="project" value="RHEA"/>
</dbReference>
<dbReference type="GO" id="GO:0005524">
    <property type="term" value="F:ATP binding"/>
    <property type="evidence" value="ECO:0007669"/>
    <property type="project" value="UniProtKB-KW"/>
</dbReference>
<dbReference type="GO" id="GO:0050567">
    <property type="term" value="F:glutaminyl-tRNA synthase (glutamine-hydrolyzing) activity"/>
    <property type="evidence" value="ECO:0007669"/>
    <property type="project" value="UniProtKB-UniRule"/>
</dbReference>
<dbReference type="GO" id="GO:0070681">
    <property type="term" value="P:glutaminyl-tRNAGln biosynthesis via transamidation"/>
    <property type="evidence" value="ECO:0007669"/>
    <property type="project" value="TreeGrafter"/>
</dbReference>
<dbReference type="GO" id="GO:0006412">
    <property type="term" value="P:translation"/>
    <property type="evidence" value="ECO:0007669"/>
    <property type="project" value="UniProtKB-UniRule"/>
</dbReference>
<dbReference type="FunFam" id="1.10.10.410:FF:000001">
    <property type="entry name" value="Aspartyl/glutamyl-tRNA(Asn/Gln) amidotransferase subunit B"/>
    <property type="match status" value="1"/>
</dbReference>
<dbReference type="Gene3D" id="1.10.10.410">
    <property type="match status" value="1"/>
</dbReference>
<dbReference type="Gene3D" id="1.10.150.380">
    <property type="entry name" value="GatB domain, N-terminal subdomain"/>
    <property type="match status" value="1"/>
</dbReference>
<dbReference type="HAMAP" id="MF_00121">
    <property type="entry name" value="GatB"/>
    <property type="match status" value="1"/>
</dbReference>
<dbReference type="InterPro" id="IPR017959">
    <property type="entry name" value="Asn/Gln-tRNA_amidoTrfase_suB/E"/>
</dbReference>
<dbReference type="InterPro" id="IPR006075">
    <property type="entry name" value="Asn/Gln-tRNA_Trfase_suB/E_cat"/>
</dbReference>
<dbReference type="InterPro" id="IPR018027">
    <property type="entry name" value="Asn/Gln_amidotransferase"/>
</dbReference>
<dbReference type="InterPro" id="IPR003789">
    <property type="entry name" value="Asn/Gln_tRNA_amidoTrase-B-like"/>
</dbReference>
<dbReference type="InterPro" id="IPR004413">
    <property type="entry name" value="GatB"/>
</dbReference>
<dbReference type="InterPro" id="IPR042114">
    <property type="entry name" value="GatB_C_1"/>
</dbReference>
<dbReference type="InterPro" id="IPR023168">
    <property type="entry name" value="GatB_Yqey_C_2"/>
</dbReference>
<dbReference type="InterPro" id="IPR017958">
    <property type="entry name" value="Gln-tRNA_amidoTrfase_suB_CS"/>
</dbReference>
<dbReference type="InterPro" id="IPR014746">
    <property type="entry name" value="Gln_synth/guanido_kin_cat_dom"/>
</dbReference>
<dbReference type="NCBIfam" id="TIGR00133">
    <property type="entry name" value="gatB"/>
    <property type="match status" value="1"/>
</dbReference>
<dbReference type="NCBIfam" id="NF004012">
    <property type="entry name" value="PRK05477.1-2"/>
    <property type="match status" value="1"/>
</dbReference>
<dbReference type="NCBIfam" id="NF004014">
    <property type="entry name" value="PRK05477.1-4"/>
    <property type="match status" value="1"/>
</dbReference>
<dbReference type="NCBIfam" id="NF004015">
    <property type="entry name" value="PRK05477.1-5"/>
    <property type="match status" value="1"/>
</dbReference>
<dbReference type="PANTHER" id="PTHR11659">
    <property type="entry name" value="GLUTAMYL-TRNA GLN AMIDOTRANSFERASE SUBUNIT B MITOCHONDRIAL AND PROKARYOTIC PET112-RELATED"/>
    <property type="match status" value="1"/>
</dbReference>
<dbReference type="PANTHER" id="PTHR11659:SF0">
    <property type="entry name" value="GLUTAMYL-TRNA(GLN) AMIDOTRANSFERASE SUBUNIT B, MITOCHONDRIAL"/>
    <property type="match status" value="1"/>
</dbReference>
<dbReference type="Pfam" id="PF02934">
    <property type="entry name" value="GatB_N"/>
    <property type="match status" value="1"/>
</dbReference>
<dbReference type="Pfam" id="PF02637">
    <property type="entry name" value="GatB_Yqey"/>
    <property type="match status" value="1"/>
</dbReference>
<dbReference type="SMART" id="SM00845">
    <property type="entry name" value="GatB_Yqey"/>
    <property type="match status" value="1"/>
</dbReference>
<dbReference type="SUPFAM" id="SSF89095">
    <property type="entry name" value="GatB/YqeY motif"/>
    <property type="match status" value="1"/>
</dbReference>
<dbReference type="SUPFAM" id="SSF55931">
    <property type="entry name" value="Glutamine synthetase/guanido kinase"/>
    <property type="match status" value="1"/>
</dbReference>
<dbReference type="PROSITE" id="PS01234">
    <property type="entry name" value="GATB"/>
    <property type="match status" value="1"/>
</dbReference>
<keyword id="KW-0067">ATP-binding</keyword>
<keyword id="KW-0436">Ligase</keyword>
<keyword id="KW-0547">Nucleotide-binding</keyword>
<keyword id="KW-0648">Protein biosynthesis</keyword>
<organism>
    <name type="scientific">Brucella melitensis biotype 2 (strain ATCC 23457)</name>
    <dbReference type="NCBI Taxonomy" id="546272"/>
    <lineage>
        <taxon>Bacteria</taxon>
        <taxon>Pseudomonadati</taxon>
        <taxon>Pseudomonadota</taxon>
        <taxon>Alphaproteobacteria</taxon>
        <taxon>Hyphomicrobiales</taxon>
        <taxon>Brucellaceae</taxon>
        <taxon>Brucella/Ochrobactrum group</taxon>
        <taxon>Brucella</taxon>
    </lineage>
</organism>
<evidence type="ECO:0000255" key="1">
    <source>
        <dbReference type="HAMAP-Rule" id="MF_00121"/>
    </source>
</evidence>
<accession>C0RIN3</accession>
<proteinExistence type="inferred from homology"/>